<name>ZIC3_XENTR</name>
<comment type="function">
    <text evidence="1">Probably acts as a transcriptional activator. May bind to the minimal GLI-consensus sequence 5'-GGGTGGTC-3'. Can determine the ectodermal cell fate and promote the earliest step of neural and neural crest development. Involved in establishing left-right asymmetry in the embryo (By similarity).</text>
</comment>
<comment type="subcellular location">
    <subcellularLocation>
        <location evidence="2">Nucleus</location>
    </subcellularLocation>
    <subcellularLocation>
        <location evidence="1">Cytoplasm</location>
    </subcellularLocation>
</comment>
<comment type="domain">
    <text evidence="1">The C2H2-type 3, 4 and 5 zinc finger domains are necessary for transcription activation. The zinc fingers and the N-terminus are independently important for establishing the L/R axis (By similarity).</text>
</comment>
<comment type="similarity">
    <text evidence="3">Belongs to the GLI C2H2-type zinc-finger protein family.</text>
</comment>
<evidence type="ECO:0000250" key="1"/>
<evidence type="ECO:0000250" key="2">
    <source>
        <dbReference type="UniProtKB" id="O57311"/>
    </source>
</evidence>
<evidence type="ECO:0000255" key="3"/>
<evidence type="ECO:0000255" key="4">
    <source>
        <dbReference type="PROSITE-ProRule" id="PRU00042"/>
    </source>
</evidence>
<evidence type="ECO:0000256" key="5">
    <source>
        <dbReference type="SAM" id="MobiDB-lite"/>
    </source>
</evidence>
<evidence type="ECO:0000312" key="6">
    <source>
        <dbReference type="EMBL" id="AAH75118.1"/>
    </source>
</evidence>
<organism>
    <name type="scientific">Xenopus tropicalis</name>
    <name type="common">Western clawed frog</name>
    <name type="synonym">Silurana tropicalis</name>
    <dbReference type="NCBI Taxonomy" id="8364"/>
    <lineage>
        <taxon>Eukaryota</taxon>
        <taxon>Metazoa</taxon>
        <taxon>Chordata</taxon>
        <taxon>Craniata</taxon>
        <taxon>Vertebrata</taxon>
        <taxon>Euteleostomi</taxon>
        <taxon>Amphibia</taxon>
        <taxon>Batrachia</taxon>
        <taxon>Anura</taxon>
        <taxon>Pipoidea</taxon>
        <taxon>Pipidae</taxon>
        <taxon>Xenopodinae</taxon>
        <taxon>Xenopus</taxon>
        <taxon>Silurana</taxon>
    </lineage>
</organism>
<gene>
    <name type="primary">zic3</name>
</gene>
<keyword id="KW-0010">Activator</keyword>
<keyword id="KW-0963">Cytoplasm</keyword>
<keyword id="KW-0217">Developmental protein</keyword>
<keyword id="KW-0221">Differentiation</keyword>
<keyword id="KW-0238">DNA-binding</keyword>
<keyword id="KW-0479">Metal-binding</keyword>
<keyword id="KW-0524">Neurogenesis</keyword>
<keyword id="KW-0539">Nucleus</keyword>
<keyword id="KW-1185">Reference proteome</keyword>
<keyword id="KW-0677">Repeat</keyword>
<keyword id="KW-0804">Transcription</keyword>
<keyword id="KW-0805">Transcription regulation</keyword>
<keyword id="KW-0862">Zinc</keyword>
<keyword id="KW-0863">Zinc-finger</keyword>
<proteinExistence type="evidence at transcript level"/>
<protein>
    <recommendedName>
        <fullName evidence="2">Zinc finger protein ZIC 3</fullName>
    </recommendedName>
    <alternativeName>
        <fullName evidence="2">Zinc finger protein of the cerebellum 3</fullName>
    </alternativeName>
</protein>
<dbReference type="EMBL" id="BC075118">
    <property type="protein sequence ID" value="AAH75118.1"/>
    <property type="molecule type" value="mRNA"/>
</dbReference>
<dbReference type="RefSeq" id="NP_001005691.1">
    <property type="nucleotide sequence ID" value="NM_001005691.1"/>
</dbReference>
<dbReference type="SMR" id="Q6DJQ6"/>
<dbReference type="FunCoup" id="Q6DJQ6">
    <property type="interactions" value="1773"/>
</dbReference>
<dbReference type="PaxDb" id="8364-ENSXETP00000052876"/>
<dbReference type="DNASU" id="448197"/>
<dbReference type="GeneID" id="448197"/>
<dbReference type="KEGG" id="xtr:448197"/>
<dbReference type="AGR" id="Xenbase:XB-GENE-480431"/>
<dbReference type="CTD" id="7547"/>
<dbReference type="Xenbase" id="XB-GENE-480431">
    <property type="gene designation" value="zic3"/>
</dbReference>
<dbReference type="eggNOG" id="KOG1721">
    <property type="taxonomic scope" value="Eukaryota"/>
</dbReference>
<dbReference type="HOGENOM" id="CLU_002678_37_1_1"/>
<dbReference type="InParanoid" id="Q6DJQ6"/>
<dbReference type="OMA" id="GTPRHHD"/>
<dbReference type="OrthoDB" id="3214149at2759"/>
<dbReference type="PhylomeDB" id="Q6DJQ6"/>
<dbReference type="TreeFam" id="TF351425"/>
<dbReference type="Proteomes" id="UP000008143">
    <property type="component" value="Chromosome 8"/>
</dbReference>
<dbReference type="Bgee" id="ENSXETG00000024458">
    <property type="expression patterns" value="Expressed in gastrula and 12 other cell types or tissues"/>
</dbReference>
<dbReference type="GO" id="GO:0005737">
    <property type="term" value="C:cytoplasm"/>
    <property type="evidence" value="ECO:0000250"/>
    <property type="project" value="UniProtKB"/>
</dbReference>
<dbReference type="GO" id="GO:0005634">
    <property type="term" value="C:nucleus"/>
    <property type="evidence" value="ECO:0000250"/>
    <property type="project" value="UniProtKB"/>
</dbReference>
<dbReference type="GO" id="GO:0003700">
    <property type="term" value="F:DNA-binding transcription factor activity"/>
    <property type="evidence" value="ECO:0000250"/>
    <property type="project" value="UniProtKB"/>
</dbReference>
<dbReference type="GO" id="GO:0000977">
    <property type="term" value="F:RNA polymerase II transcription regulatory region sequence-specific DNA binding"/>
    <property type="evidence" value="ECO:0007669"/>
    <property type="project" value="InterPro"/>
</dbReference>
<dbReference type="GO" id="GO:0043565">
    <property type="term" value="F:sequence-specific DNA binding"/>
    <property type="evidence" value="ECO:0000250"/>
    <property type="project" value="UniProtKB"/>
</dbReference>
<dbReference type="GO" id="GO:0008270">
    <property type="term" value="F:zinc ion binding"/>
    <property type="evidence" value="ECO:0007669"/>
    <property type="project" value="UniProtKB-KW"/>
</dbReference>
<dbReference type="GO" id="GO:0007368">
    <property type="term" value="P:determination of left/right symmetry"/>
    <property type="evidence" value="ECO:0000250"/>
    <property type="project" value="UniProtKB"/>
</dbReference>
<dbReference type="GO" id="GO:0000578">
    <property type="term" value="P:embryonic axis specification"/>
    <property type="evidence" value="ECO:0000250"/>
    <property type="project" value="UniProtKB"/>
</dbReference>
<dbReference type="GO" id="GO:0007399">
    <property type="term" value="P:nervous system development"/>
    <property type="evidence" value="ECO:0007669"/>
    <property type="project" value="UniProtKB-KW"/>
</dbReference>
<dbReference type="GO" id="GO:0014034">
    <property type="term" value="P:neural crest cell fate commitment"/>
    <property type="evidence" value="ECO:0000250"/>
    <property type="project" value="UniProtKB"/>
</dbReference>
<dbReference type="GO" id="GO:0045893">
    <property type="term" value="P:positive regulation of DNA-templated transcription"/>
    <property type="evidence" value="ECO:0000250"/>
    <property type="project" value="UniProtKB"/>
</dbReference>
<dbReference type="GO" id="GO:0045944">
    <property type="term" value="P:positive regulation of transcription by RNA polymerase II"/>
    <property type="evidence" value="ECO:0000250"/>
    <property type="project" value="UniProtKB"/>
</dbReference>
<dbReference type="FunFam" id="3.30.160.60:FF:000035">
    <property type="entry name" value="Zinc finger protein ZIC 1"/>
    <property type="match status" value="1"/>
</dbReference>
<dbReference type="FunFam" id="3.30.160.60:FF:000039">
    <property type="entry name" value="Zinc finger protein ZIC 1"/>
    <property type="match status" value="1"/>
</dbReference>
<dbReference type="FunFam" id="3.30.160.60:FF:000041">
    <property type="entry name" value="Zinc finger protein ZIC 1"/>
    <property type="match status" value="1"/>
</dbReference>
<dbReference type="FunFam" id="3.30.160.60:FF:001330">
    <property type="entry name" value="Zinc finger protein ZIC 4"/>
    <property type="match status" value="1"/>
</dbReference>
<dbReference type="Gene3D" id="3.30.160.60">
    <property type="entry name" value="Classic Zinc Finger"/>
    <property type="match status" value="4"/>
</dbReference>
<dbReference type="InterPro" id="IPR043359">
    <property type="entry name" value="GLI-like"/>
</dbReference>
<dbReference type="InterPro" id="IPR056436">
    <property type="entry name" value="Znf-C2H2_ZIC1-5/GLI1-3-like"/>
</dbReference>
<dbReference type="InterPro" id="IPR036236">
    <property type="entry name" value="Znf_C2H2_sf"/>
</dbReference>
<dbReference type="InterPro" id="IPR013087">
    <property type="entry name" value="Znf_C2H2_type"/>
</dbReference>
<dbReference type="InterPro" id="IPR041643">
    <property type="entry name" value="Znf_ZIC"/>
</dbReference>
<dbReference type="PANTHER" id="PTHR45718:SF8">
    <property type="entry name" value="GLIS FAMILY ZINC FINGER 2"/>
    <property type="match status" value="1"/>
</dbReference>
<dbReference type="PANTHER" id="PTHR45718">
    <property type="entry name" value="TRANSCRIPTIONAL ACTIVATOR CUBITUS INTERRUPTUS"/>
    <property type="match status" value="1"/>
</dbReference>
<dbReference type="Pfam" id="PF00096">
    <property type="entry name" value="zf-C2H2"/>
    <property type="match status" value="3"/>
</dbReference>
<dbReference type="Pfam" id="PF23561">
    <property type="entry name" value="zf-C2H2_15"/>
    <property type="match status" value="1"/>
</dbReference>
<dbReference type="Pfam" id="PF18366">
    <property type="entry name" value="zf_ZIC"/>
    <property type="match status" value="1"/>
</dbReference>
<dbReference type="SMART" id="SM00355">
    <property type="entry name" value="ZnF_C2H2"/>
    <property type="match status" value="5"/>
</dbReference>
<dbReference type="SUPFAM" id="SSF57667">
    <property type="entry name" value="beta-beta-alpha zinc fingers"/>
    <property type="match status" value="2"/>
</dbReference>
<dbReference type="PROSITE" id="PS00028">
    <property type="entry name" value="ZINC_FINGER_C2H2_1"/>
    <property type="match status" value="3"/>
</dbReference>
<dbReference type="PROSITE" id="PS50157">
    <property type="entry name" value="ZINC_FINGER_C2H2_2"/>
    <property type="match status" value="4"/>
</dbReference>
<sequence length="441" mass="48413">MTMLLDGGPQFPTLGVGGFGTARHHEMSNRDAGMGLNPFTEPSHAAAFKLSPASHDLSSSQSSAFTPQASGYANSLGHHAGQVPSYGGAAFNSTRDFLFRNRNSGIADSTSAGGQHGLFASHGPPGIGEPPGHLIFPGLHEQSSSHTSSNGHVVNGQMHLGLRGDIFGRPDPYRAVPSPRTDHYAAAQFHNYNHMNMSMNVAAHHGPGAFFRYMRQPIKQELSCKWLEESPMNRPQKTCDRTFSSMHELVTHMTMEHVGGPEQTNHICYWEECPRGGKSFKAKYKLVNHIRVHTGEKPFPCPFPGCGKIFARSENLKIHKRTHTGEKPFKCEFEGCDRRFANSSDRKKHMHVHTSDKPYICKVCDKSYTHPSSLRKHMKVHESQGSDSSPAASSGYESATPPAMVSANSEEPSKNSSATHQTNNSSHNTGLLPPNFNEWYV</sequence>
<reference evidence="6" key="1">
    <citation type="submission" date="2004-06" db="EMBL/GenBank/DDBJ databases">
        <authorList>
            <consortium name="NIH - Xenopus Gene Collection (XGC) project"/>
        </authorList>
    </citation>
    <scope>NUCLEOTIDE SEQUENCE [LARGE SCALE MRNA]</scope>
    <source>
        <tissue evidence="6">Gastrula</tissue>
    </source>
</reference>
<feature type="chain" id="PRO_0000364028" description="Zinc finger protein ZIC 3">
    <location>
        <begin position="1"/>
        <end position="441"/>
    </location>
</feature>
<feature type="zinc finger region" description="C2H2-type 1; atypical" evidence="4">
    <location>
        <begin position="222"/>
        <end position="257"/>
    </location>
</feature>
<feature type="zinc finger region" description="C2H2-type 2; atypical" evidence="4">
    <location>
        <begin position="266"/>
        <end position="293"/>
    </location>
</feature>
<feature type="zinc finger region" description="C2H2-type 3" evidence="4">
    <location>
        <begin position="299"/>
        <end position="323"/>
    </location>
</feature>
<feature type="zinc finger region" description="C2H2-type 4" evidence="4">
    <location>
        <begin position="329"/>
        <end position="353"/>
    </location>
</feature>
<feature type="zinc finger region" description="C2H2-type 5" evidence="4">
    <location>
        <begin position="359"/>
        <end position="381"/>
    </location>
</feature>
<feature type="region of interest" description="Disordered" evidence="5">
    <location>
        <begin position="375"/>
        <end position="441"/>
    </location>
</feature>
<feature type="compositionally biased region" description="Low complexity" evidence="5">
    <location>
        <begin position="383"/>
        <end position="399"/>
    </location>
</feature>
<feature type="compositionally biased region" description="Polar residues" evidence="5">
    <location>
        <begin position="406"/>
        <end position="429"/>
    </location>
</feature>
<accession>Q6DJQ6</accession>